<reference key="1">
    <citation type="journal article" date="2007" name="J. Bacteriol.">
        <title>Genome sequence analysis of the emerging human pathogenic acetic acid bacterium Granulibacter bethesdensis.</title>
        <authorList>
            <person name="Greenberg D.E."/>
            <person name="Porcella S.F."/>
            <person name="Zelazny A.M."/>
            <person name="Virtaneva K."/>
            <person name="Sturdevant D.E."/>
            <person name="Kupko J.J. III"/>
            <person name="Barbian K.D."/>
            <person name="Babar A."/>
            <person name="Dorward D.W."/>
            <person name="Holland S.M."/>
        </authorList>
    </citation>
    <scope>NUCLEOTIDE SEQUENCE [LARGE SCALE GENOMIC DNA]</scope>
    <source>
        <strain>ATCC BAA-1260 / CGDNIH1</strain>
    </source>
</reference>
<comment type="function">
    <text evidence="1">Catalyzes the phosphorylation of the hydroxyl group of 4-methyl-5-beta-hydroxyethylthiazole (THZ).</text>
</comment>
<comment type="catalytic activity">
    <reaction evidence="1">
        <text>5-(2-hydroxyethyl)-4-methylthiazole + ATP = 4-methyl-5-(2-phosphooxyethyl)-thiazole + ADP + H(+)</text>
        <dbReference type="Rhea" id="RHEA:24212"/>
        <dbReference type="ChEBI" id="CHEBI:15378"/>
        <dbReference type="ChEBI" id="CHEBI:17957"/>
        <dbReference type="ChEBI" id="CHEBI:30616"/>
        <dbReference type="ChEBI" id="CHEBI:58296"/>
        <dbReference type="ChEBI" id="CHEBI:456216"/>
        <dbReference type="EC" id="2.7.1.50"/>
    </reaction>
</comment>
<comment type="cofactor">
    <cofactor evidence="1">
        <name>Mg(2+)</name>
        <dbReference type="ChEBI" id="CHEBI:18420"/>
    </cofactor>
</comment>
<comment type="pathway">
    <text evidence="1">Cofactor biosynthesis; thiamine diphosphate biosynthesis; 4-methyl-5-(2-phosphoethyl)-thiazole from 5-(2-hydroxyethyl)-4-methylthiazole: step 1/1.</text>
</comment>
<comment type="similarity">
    <text evidence="1">Belongs to the Thz kinase family.</text>
</comment>
<comment type="sequence caution" evidence="2">
    <conflict type="erroneous initiation">
        <sequence resource="EMBL-CDS" id="ABI61198"/>
    </conflict>
</comment>
<dbReference type="EC" id="2.7.1.50" evidence="1"/>
<dbReference type="EMBL" id="CP000394">
    <property type="protein sequence ID" value="ABI61198.1"/>
    <property type="status" value="ALT_INIT"/>
    <property type="molecule type" value="Genomic_DNA"/>
</dbReference>
<dbReference type="RefSeq" id="WP_011631008.1">
    <property type="nucleotide sequence ID" value="NC_008343.2"/>
</dbReference>
<dbReference type="SMR" id="Q0BVF4"/>
<dbReference type="STRING" id="391165.GbCGDNIH1_0300"/>
<dbReference type="KEGG" id="gbe:GbCGDNIH1_0300"/>
<dbReference type="eggNOG" id="COG2145">
    <property type="taxonomic scope" value="Bacteria"/>
</dbReference>
<dbReference type="HOGENOM" id="CLU_019943_0_1_5"/>
<dbReference type="OrthoDB" id="8909021at2"/>
<dbReference type="UniPathway" id="UPA00060">
    <property type="reaction ID" value="UER00139"/>
</dbReference>
<dbReference type="Proteomes" id="UP000001963">
    <property type="component" value="Chromosome"/>
</dbReference>
<dbReference type="GO" id="GO:0005524">
    <property type="term" value="F:ATP binding"/>
    <property type="evidence" value="ECO:0007669"/>
    <property type="project" value="UniProtKB-UniRule"/>
</dbReference>
<dbReference type="GO" id="GO:0004417">
    <property type="term" value="F:hydroxyethylthiazole kinase activity"/>
    <property type="evidence" value="ECO:0007669"/>
    <property type="project" value="UniProtKB-UniRule"/>
</dbReference>
<dbReference type="GO" id="GO:0000287">
    <property type="term" value="F:magnesium ion binding"/>
    <property type="evidence" value="ECO:0007669"/>
    <property type="project" value="UniProtKB-UniRule"/>
</dbReference>
<dbReference type="GO" id="GO:0009228">
    <property type="term" value="P:thiamine biosynthetic process"/>
    <property type="evidence" value="ECO:0007669"/>
    <property type="project" value="UniProtKB-KW"/>
</dbReference>
<dbReference type="GO" id="GO:0009229">
    <property type="term" value="P:thiamine diphosphate biosynthetic process"/>
    <property type="evidence" value="ECO:0007669"/>
    <property type="project" value="UniProtKB-UniRule"/>
</dbReference>
<dbReference type="CDD" id="cd01170">
    <property type="entry name" value="THZ_kinase"/>
    <property type="match status" value="1"/>
</dbReference>
<dbReference type="Gene3D" id="3.40.1190.20">
    <property type="match status" value="1"/>
</dbReference>
<dbReference type="HAMAP" id="MF_00228">
    <property type="entry name" value="Thz_kinase"/>
    <property type="match status" value="1"/>
</dbReference>
<dbReference type="InterPro" id="IPR000417">
    <property type="entry name" value="Hyethyz_kinase"/>
</dbReference>
<dbReference type="InterPro" id="IPR029056">
    <property type="entry name" value="Ribokinase-like"/>
</dbReference>
<dbReference type="NCBIfam" id="NF006830">
    <property type="entry name" value="PRK09355.1"/>
    <property type="match status" value="1"/>
</dbReference>
<dbReference type="NCBIfam" id="TIGR00694">
    <property type="entry name" value="thiM"/>
    <property type="match status" value="1"/>
</dbReference>
<dbReference type="Pfam" id="PF02110">
    <property type="entry name" value="HK"/>
    <property type="match status" value="1"/>
</dbReference>
<dbReference type="PIRSF" id="PIRSF000513">
    <property type="entry name" value="Thz_kinase"/>
    <property type="match status" value="1"/>
</dbReference>
<dbReference type="PRINTS" id="PR01099">
    <property type="entry name" value="HYETHTZKNASE"/>
</dbReference>
<dbReference type="SUPFAM" id="SSF53613">
    <property type="entry name" value="Ribokinase-like"/>
    <property type="match status" value="1"/>
</dbReference>
<evidence type="ECO:0000255" key="1">
    <source>
        <dbReference type="HAMAP-Rule" id="MF_00228"/>
    </source>
</evidence>
<evidence type="ECO:0000305" key="2"/>
<proteinExistence type="inferred from homology"/>
<name>THIM_GRABC</name>
<accession>Q0BVF4</accession>
<organism>
    <name type="scientific">Granulibacter bethesdensis (strain ATCC BAA-1260 / CGDNIH1)</name>
    <dbReference type="NCBI Taxonomy" id="391165"/>
    <lineage>
        <taxon>Bacteria</taxon>
        <taxon>Pseudomonadati</taxon>
        <taxon>Pseudomonadota</taxon>
        <taxon>Alphaproteobacteria</taxon>
        <taxon>Acetobacterales</taxon>
        <taxon>Acetobacteraceae</taxon>
        <taxon>Granulibacter</taxon>
    </lineage>
</organism>
<gene>
    <name evidence="1" type="primary">thiM</name>
    <name type="ordered locus">GbCGDNIH1_0300</name>
</gene>
<feature type="chain" id="PRO_0000383864" description="Hydroxyethylthiazole kinase">
    <location>
        <begin position="1"/>
        <end position="274"/>
    </location>
</feature>
<feature type="binding site" evidence="1">
    <location>
        <position position="54"/>
    </location>
    <ligand>
        <name>substrate</name>
    </ligand>
</feature>
<feature type="binding site" evidence="1">
    <location>
        <position position="129"/>
    </location>
    <ligand>
        <name>ATP</name>
        <dbReference type="ChEBI" id="CHEBI:30616"/>
    </ligand>
</feature>
<feature type="binding site" evidence="1">
    <location>
        <position position="175"/>
    </location>
    <ligand>
        <name>ATP</name>
        <dbReference type="ChEBI" id="CHEBI:30616"/>
    </ligand>
</feature>
<feature type="binding site" evidence="1">
    <location>
        <position position="202"/>
    </location>
    <ligand>
        <name>substrate</name>
    </ligand>
</feature>
<sequence length="274" mass="28107">MTEEPLSAAWLTERTIYLLTLLREKRPLVHNITNLVVTNTTANALLALGASPAMVEGVEEVDSFARMADSLVINLGTMSSPRAAAMRLAMAAARQAGKPVVLDPVAVGALRYRTELARDLLEAKPHIVRGNASEIIALAGDGGGGRGVDSLVSSTAALEAASILARRTGGAVAVTGATDYVTDGTRLIGIANGHPMMTRVTGLGCTATALIGAFAAVEPDPLVAACAGLCATGLAGELAAIRADGPGSLQVEFLDALYALDSAILRDAARWVLP</sequence>
<protein>
    <recommendedName>
        <fullName evidence="1">Hydroxyethylthiazole kinase</fullName>
        <ecNumber evidence="1">2.7.1.50</ecNumber>
    </recommendedName>
    <alternativeName>
        <fullName evidence="1">4-methyl-5-beta-hydroxyethylthiazole kinase</fullName>
        <shortName evidence="1">TH kinase</shortName>
        <shortName evidence="1">Thz kinase</shortName>
    </alternativeName>
</protein>
<keyword id="KW-0067">ATP-binding</keyword>
<keyword id="KW-0418">Kinase</keyword>
<keyword id="KW-0460">Magnesium</keyword>
<keyword id="KW-0479">Metal-binding</keyword>
<keyword id="KW-0547">Nucleotide-binding</keyword>
<keyword id="KW-1185">Reference proteome</keyword>
<keyword id="KW-0784">Thiamine biosynthesis</keyword>
<keyword id="KW-0808">Transferase</keyword>